<accession>A8Z058</accession>
<sequence>MNRQQNDLILQFAAVIIFFMVMVFGFSLFLAGHYTPGGGFVGGLLFASSLVIITIAFDIETMRKIFPLDFKILIGIGLVFCIATPIASWFLGKNFFTHVTFDIPLFILEPVHMTTAVFFDFGVLCAVVGTVMTIIISIGENE</sequence>
<gene>
    <name type="primary">mnhB1</name>
    <name type="ordered locus">USA300HOU_0911</name>
</gene>
<protein>
    <recommendedName>
        <fullName>Na(+)/H(+) antiporter subunit B1</fullName>
    </recommendedName>
    <alternativeName>
        <fullName>Mnh complex subunit B1</fullName>
    </alternativeName>
</protein>
<name>MNHB1_STAAT</name>
<dbReference type="EMBL" id="CP000730">
    <property type="protein sequence ID" value="ABX28932.1"/>
    <property type="molecule type" value="Genomic_DNA"/>
</dbReference>
<dbReference type="RefSeq" id="WP_001081626.1">
    <property type="nucleotide sequence ID" value="NC_010079.1"/>
</dbReference>
<dbReference type="SMR" id="A8Z058"/>
<dbReference type="GeneID" id="66839149"/>
<dbReference type="KEGG" id="sax:USA300HOU_0911"/>
<dbReference type="HOGENOM" id="CLU_101659_1_1_9"/>
<dbReference type="GO" id="GO:0005886">
    <property type="term" value="C:plasma membrane"/>
    <property type="evidence" value="ECO:0007669"/>
    <property type="project" value="UniProtKB-SubCell"/>
</dbReference>
<dbReference type="GO" id="GO:0015297">
    <property type="term" value="F:antiporter activity"/>
    <property type="evidence" value="ECO:0007669"/>
    <property type="project" value="UniProtKB-KW"/>
</dbReference>
<dbReference type="GO" id="GO:0008324">
    <property type="term" value="F:monoatomic cation transmembrane transporter activity"/>
    <property type="evidence" value="ECO:0007669"/>
    <property type="project" value="InterPro"/>
</dbReference>
<dbReference type="GO" id="GO:1902600">
    <property type="term" value="P:proton transmembrane transport"/>
    <property type="evidence" value="ECO:0007669"/>
    <property type="project" value="UniProtKB-KW"/>
</dbReference>
<dbReference type="GO" id="GO:0006814">
    <property type="term" value="P:sodium ion transport"/>
    <property type="evidence" value="ECO:0007669"/>
    <property type="project" value="UniProtKB-KW"/>
</dbReference>
<dbReference type="InterPro" id="IPR050622">
    <property type="entry name" value="CPA3_antiporter_subunitB"/>
</dbReference>
<dbReference type="InterPro" id="IPR005281">
    <property type="entry name" value="CPA3_sub_B"/>
</dbReference>
<dbReference type="InterPro" id="IPR007182">
    <property type="entry name" value="MnhB"/>
</dbReference>
<dbReference type="NCBIfam" id="TIGR00943">
    <property type="entry name" value="2a6301s02"/>
    <property type="match status" value="1"/>
</dbReference>
<dbReference type="NCBIfam" id="NF009223">
    <property type="entry name" value="PRK12573.1"/>
    <property type="match status" value="1"/>
</dbReference>
<dbReference type="PANTHER" id="PTHR33932">
    <property type="entry name" value="NA(+)/H(+) ANTIPORTER SUBUNIT B"/>
    <property type="match status" value="1"/>
</dbReference>
<dbReference type="PANTHER" id="PTHR33932:SF4">
    <property type="entry name" value="NA(+)_H(+) ANTIPORTER SUBUNIT B"/>
    <property type="match status" value="1"/>
</dbReference>
<dbReference type="Pfam" id="PF04039">
    <property type="entry name" value="MnhB"/>
    <property type="match status" value="1"/>
</dbReference>
<evidence type="ECO:0000250" key="1"/>
<evidence type="ECO:0000255" key="2"/>
<evidence type="ECO:0000305" key="3"/>
<organism>
    <name type="scientific">Staphylococcus aureus (strain USA300 / TCH1516)</name>
    <dbReference type="NCBI Taxonomy" id="451516"/>
    <lineage>
        <taxon>Bacteria</taxon>
        <taxon>Bacillati</taxon>
        <taxon>Bacillota</taxon>
        <taxon>Bacilli</taxon>
        <taxon>Bacillales</taxon>
        <taxon>Staphylococcaceae</taxon>
        <taxon>Staphylococcus</taxon>
    </lineage>
</organism>
<comment type="function">
    <text evidence="1">Mnh complex is a Na(+)/H(+) antiporter involved in Na(+) excretion.</text>
</comment>
<comment type="subunit">
    <text evidence="1">May form a heterooligomeric complex that consists of seven subunits: mnhA1, mnhB1, mnhC1, mnhD1, mnhE1, mnhF1 and mnhG1.</text>
</comment>
<comment type="subcellular location">
    <subcellularLocation>
        <location evidence="3">Cell membrane</location>
        <topology evidence="3">Multi-pass membrane protein</topology>
    </subcellularLocation>
</comment>
<comment type="similarity">
    <text evidence="3">Belongs to the CPA3 antiporters (TC 2.A.63) subunit B family.</text>
</comment>
<reference key="1">
    <citation type="journal article" date="2007" name="BMC Microbiol.">
        <title>Subtle genetic changes enhance virulence of methicillin resistant and sensitive Staphylococcus aureus.</title>
        <authorList>
            <person name="Highlander S.K."/>
            <person name="Hulten K.G."/>
            <person name="Qin X."/>
            <person name="Jiang H."/>
            <person name="Yerrapragada S."/>
            <person name="Mason E.O. Jr."/>
            <person name="Shang Y."/>
            <person name="Williams T.M."/>
            <person name="Fortunov R.M."/>
            <person name="Liu Y."/>
            <person name="Igboeli O."/>
            <person name="Petrosino J."/>
            <person name="Tirumalai M."/>
            <person name="Uzman A."/>
            <person name="Fox G.E."/>
            <person name="Cardenas A.M."/>
            <person name="Muzny D.M."/>
            <person name="Hemphill L."/>
            <person name="Ding Y."/>
            <person name="Dugan S."/>
            <person name="Blyth P.R."/>
            <person name="Buhay C.J."/>
            <person name="Dinh H.H."/>
            <person name="Hawes A.C."/>
            <person name="Holder M."/>
            <person name="Kovar C.L."/>
            <person name="Lee S.L."/>
            <person name="Liu W."/>
            <person name="Nazareth L.V."/>
            <person name="Wang Q."/>
            <person name="Zhou J."/>
            <person name="Kaplan S.L."/>
            <person name="Weinstock G.M."/>
        </authorList>
    </citation>
    <scope>NUCLEOTIDE SEQUENCE [LARGE SCALE GENOMIC DNA]</scope>
    <source>
        <strain>USA300 / TCH1516</strain>
    </source>
</reference>
<proteinExistence type="inferred from homology"/>
<keyword id="KW-0050">Antiport</keyword>
<keyword id="KW-1003">Cell membrane</keyword>
<keyword id="KW-0375">Hydrogen ion transport</keyword>
<keyword id="KW-0406">Ion transport</keyword>
<keyword id="KW-0472">Membrane</keyword>
<keyword id="KW-0915">Sodium</keyword>
<keyword id="KW-0739">Sodium transport</keyword>
<keyword id="KW-0812">Transmembrane</keyword>
<keyword id="KW-1133">Transmembrane helix</keyword>
<keyword id="KW-0813">Transport</keyword>
<feature type="chain" id="PRO_0000372111" description="Na(+)/H(+) antiporter subunit B1">
    <location>
        <begin position="1"/>
        <end position="142"/>
    </location>
</feature>
<feature type="transmembrane region" description="Helical" evidence="2">
    <location>
        <begin position="12"/>
        <end position="32"/>
    </location>
</feature>
<feature type="transmembrane region" description="Helical" evidence="2">
    <location>
        <begin position="37"/>
        <end position="57"/>
    </location>
</feature>
<feature type="transmembrane region" description="Helical" evidence="2">
    <location>
        <begin position="72"/>
        <end position="92"/>
    </location>
</feature>
<feature type="transmembrane region" description="Helical" evidence="2">
    <location>
        <begin position="116"/>
        <end position="136"/>
    </location>
</feature>